<proteinExistence type="inferred from homology"/>
<sequence>MARIAGIDLPKEKRVEVGLTYIYGIGINRSREILKETGVNPDTRVKDLSEEEVNTIRDYIGKNFVIEGDLRRTIALDIKRLVEIGCYRGIRHRRGLPVRGQKTKTNARTRKGPKRAISGKKNK</sequence>
<dbReference type="EMBL" id="CP000382">
    <property type="protein sequence ID" value="ABK61162.1"/>
    <property type="molecule type" value="Genomic_DNA"/>
</dbReference>
<dbReference type="RefSeq" id="WP_011721234.1">
    <property type="nucleotide sequence ID" value="NC_008593.1"/>
</dbReference>
<dbReference type="SMR" id="A0PXX2"/>
<dbReference type="STRING" id="386415.NT01CX_1141"/>
<dbReference type="KEGG" id="cno:NT01CX_1141"/>
<dbReference type="eggNOG" id="COG0099">
    <property type="taxonomic scope" value="Bacteria"/>
</dbReference>
<dbReference type="HOGENOM" id="CLU_103849_1_2_9"/>
<dbReference type="Proteomes" id="UP000008220">
    <property type="component" value="Chromosome"/>
</dbReference>
<dbReference type="GO" id="GO:0005829">
    <property type="term" value="C:cytosol"/>
    <property type="evidence" value="ECO:0007669"/>
    <property type="project" value="TreeGrafter"/>
</dbReference>
<dbReference type="GO" id="GO:0015935">
    <property type="term" value="C:small ribosomal subunit"/>
    <property type="evidence" value="ECO:0007669"/>
    <property type="project" value="TreeGrafter"/>
</dbReference>
<dbReference type="GO" id="GO:0019843">
    <property type="term" value="F:rRNA binding"/>
    <property type="evidence" value="ECO:0007669"/>
    <property type="project" value="UniProtKB-UniRule"/>
</dbReference>
<dbReference type="GO" id="GO:0003735">
    <property type="term" value="F:structural constituent of ribosome"/>
    <property type="evidence" value="ECO:0007669"/>
    <property type="project" value="InterPro"/>
</dbReference>
<dbReference type="GO" id="GO:0000049">
    <property type="term" value="F:tRNA binding"/>
    <property type="evidence" value="ECO:0007669"/>
    <property type="project" value="UniProtKB-UniRule"/>
</dbReference>
<dbReference type="GO" id="GO:0006412">
    <property type="term" value="P:translation"/>
    <property type="evidence" value="ECO:0007669"/>
    <property type="project" value="UniProtKB-UniRule"/>
</dbReference>
<dbReference type="FunFam" id="1.10.8.50:FF:000001">
    <property type="entry name" value="30S ribosomal protein S13"/>
    <property type="match status" value="1"/>
</dbReference>
<dbReference type="FunFam" id="4.10.910.10:FF:000001">
    <property type="entry name" value="30S ribosomal protein S13"/>
    <property type="match status" value="1"/>
</dbReference>
<dbReference type="Gene3D" id="1.10.8.50">
    <property type="match status" value="1"/>
</dbReference>
<dbReference type="Gene3D" id="4.10.910.10">
    <property type="entry name" value="30s ribosomal protein s13, domain 2"/>
    <property type="match status" value="1"/>
</dbReference>
<dbReference type="HAMAP" id="MF_01315">
    <property type="entry name" value="Ribosomal_uS13"/>
    <property type="match status" value="1"/>
</dbReference>
<dbReference type="InterPro" id="IPR027437">
    <property type="entry name" value="Rbsml_uS13_C"/>
</dbReference>
<dbReference type="InterPro" id="IPR001892">
    <property type="entry name" value="Ribosomal_uS13"/>
</dbReference>
<dbReference type="InterPro" id="IPR010979">
    <property type="entry name" value="Ribosomal_uS13-like_H2TH"/>
</dbReference>
<dbReference type="InterPro" id="IPR019980">
    <property type="entry name" value="Ribosomal_uS13_bac-type"/>
</dbReference>
<dbReference type="InterPro" id="IPR018269">
    <property type="entry name" value="Ribosomal_uS13_CS"/>
</dbReference>
<dbReference type="NCBIfam" id="TIGR03631">
    <property type="entry name" value="uS13_bact"/>
    <property type="match status" value="1"/>
</dbReference>
<dbReference type="PANTHER" id="PTHR10871">
    <property type="entry name" value="30S RIBOSOMAL PROTEIN S13/40S RIBOSOMAL PROTEIN S18"/>
    <property type="match status" value="1"/>
</dbReference>
<dbReference type="PANTHER" id="PTHR10871:SF1">
    <property type="entry name" value="SMALL RIBOSOMAL SUBUNIT PROTEIN US13M"/>
    <property type="match status" value="1"/>
</dbReference>
<dbReference type="Pfam" id="PF00416">
    <property type="entry name" value="Ribosomal_S13"/>
    <property type="match status" value="1"/>
</dbReference>
<dbReference type="PIRSF" id="PIRSF002134">
    <property type="entry name" value="Ribosomal_S13"/>
    <property type="match status" value="1"/>
</dbReference>
<dbReference type="SUPFAM" id="SSF46946">
    <property type="entry name" value="S13-like H2TH domain"/>
    <property type="match status" value="1"/>
</dbReference>
<dbReference type="PROSITE" id="PS00646">
    <property type="entry name" value="RIBOSOMAL_S13_1"/>
    <property type="match status" value="1"/>
</dbReference>
<dbReference type="PROSITE" id="PS50159">
    <property type="entry name" value="RIBOSOMAL_S13_2"/>
    <property type="match status" value="1"/>
</dbReference>
<keyword id="KW-1185">Reference proteome</keyword>
<keyword id="KW-0687">Ribonucleoprotein</keyword>
<keyword id="KW-0689">Ribosomal protein</keyword>
<keyword id="KW-0694">RNA-binding</keyword>
<keyword id="KW-0699">rRNA-binding</keyword>
<keyword id="KW-0820">tRNA-binding</keyword>
<organism>
    <name type="scientific">Clostridium novyi (strain NT)</name>
    <dbReference type="NCBI Taxonomy" id="386415"/>
    <lineage>
        <taxon>Bacteria</taxon>
        <taxon>Bacillati</taxon>
        <taxon>Bacillota</taxon>
        <taxon>Clostridia</taxon>
        <taxon>Eubacteriales</taxon>
        <taxon>Clostridiaceae</taxon>
        <taxon>Clostridium</taxon>
    </lineage>
</organism>
<feature type="chain" id="PRO_0000306588" description="Small ribosomal subunit protein uS13">
    <location>
        <begin position="1"/>
        <end position="123"/>
    </location>
</feature>
<feature type="region of interest" description="Disordered" evidence="2">
    <location>
        <begin position="95"/>
        <end position="123"/>
    </location>
</feature>
<gene>
    <name evidence="1" type="primary">rpsM</name>
    <name type="ordered locus">NT01CX_1141</name>
</gene>
<reference key="1">
    <citation type="journal article" date="2006" name="Nat. Biotechnol.">
        <title>The genome and transcriptomes of the anti-tumor agent Clostridium novyi-NT.</title>
        <authorList>
            <person name="Bettegowda C."/>
            <person name="Huang X."/>
            <person name="Lin J."/>
            <person name="Cheong I."/>
            <person name="Kohli M."/>
            <person name="Szabo S.A."/>
            <person name="Zhang X."/>
            <person name="Diaz L.A. Jr."/>
            <person name="Velculescu V.E."/>
            <person name="Parmigiani G."/>
            <person name="Kinzler K.W."/>
            <person name="Vogelstein B."/>
            <person name="Zhou S."/>
        </authorList>
    </citation>
    <scope>NUCLEOTIDE SEQUENCE [LARGE SCALE GENOMIC DNA]</scope>
    <source>
        <strain>NT</strain>
    </source>
</reference>
<evidence type="ECO:0000255" key="1">
    <source>
        <dbReference type="HAMAP-Rule" id="MF_01315"/>
    </source>
</evidence>
<evidence type="ECO:0000256" key="2">
    <source>
        <dbReference type="SAM" id="MobiDB-lite"/>
    </source>
</evidence>
<evidence type="ECO:0000305" key="3"/>
<protein>
    <recommendedName>
        <fullName evidence="1">Small ribosomal subunit protein uS13</fullName>
    </recommendedName>
    <alternativeName>
        <fullName evidence="3">30S ribosomal protein S13</fullName>
    </alternativeName>
</protein>
<accession>A0PXX2</accession>
<name>RS13_CLONN</name>
<comment type="function">
    <text evidence="1">Located at the top of the head of the 30S subunit, it contacts several helices of the 16S rRNA. In the 70S ribosome it contacts the 23S rRNA (bridge B1a) and protein L5 of the 50S subunit (bridge B1b), connecting the 2 subunits; these bridges are implicated in subunit movement. Contacts the tRNAs in the A and P-sites.</text>
</comment>
<comment type="subunit">
    <text evidence="1">Part of the 30S ribosomal subunit. Forms a loose heterodimer with protein S19. Forms two bridges to the 50S subunit in the 70S ribosome.</text>
</comment>
<comment type="similarity">
    <text evidence="1">Belongs to the universal ribosomal protein uS13 family.</text>
</comment>